<evidence type="ECO:0000250" key="1"/>
<evidence type="ECO:0000269" key="2">
    <source>
    </source>
</evidence>
<evidence type="ECO:0000269" key="3">
    <source>
    </source>
</evidence>
<evidence type="ECO:0000269" key="4">
    <source ref="2"/>
</evidence>
<evidence type="ECO:0000303" key="5">
    <source>
    </source>
</evidence>
<evidence type="ECO:0000303" key="6">
    <source ref="2"/>
</evidence>
<evidence type="ECO:0000305" key="7"/>
<protein>
    <recommendedName>
        <fullName>U1-theraphotoxin-Hhn1a</fullName>
        <shortName>U1-TRTX-Hhn1a</shortName>
    </recommendedName>
    <alternativeName>
        <fullName evidence="5">Hainantoxin F3-24.71</fullName>
    </alternativeName>
    <component>
        <recommendedName>
            <fullName evidence="6">Hainantoxin-VI</fullName>
            <shortName evidence="6">HNTX-VI</shortName>
        </recommendedName>
        <alternativeName>
            <fullName evidence="5">Peptide F6-25.12</fullName>
        </alternativeName>
    </component>
</protein>
<sequence length="35" mass="4062">ECKYLWGTCEKDEHCCEHLGCNKKHGWCGWDGTFG</sequence>
<reference key="1">
    <citation type="journal article" date="2010" name="J. Proteome Res.">
        <title>Molecular diversification of peptide toxins from the tarantula Haplopelma hainanum (Ornithoctonus hainana) venom based on transcriptomic, peptidomic, and genomic analyses.</title>
        <authorList>
            <person name="Tang X."/>
            <person name="Zhang Y."/>
            <person name="Hu W."/>
            <person name="Xu D."/>
            <person name="Tao H."/>
            <person name="Yang X."/>
            <person name="Li Y."/>
            <person name="Jiang L."/>
            <person name="Liang S."/>
        </authorList>
    </citation>
    <scope>PROTEIN SEQUENCE</scope>
    <scope>MASS SPECTROMETRY</scope>
    <source>
        <tissue>Venom</tissue>
    </source>
</reference>
<reference key="2">
    <citation type="journal article" date="2002" name="Dong Wu Xue Yan Jiu">
        <title>Purification, sequencing and characterization of hainantoxin-VI, a neurotoxin from the Chinese bird spider Selenocosmia hainana.</title>
        <authorList>
            <person name="Pan J.Y."/>
            <person name="Hu W.J."/>
            <person name="Liang S.P."/>
        </authorList>
    </citation>
    <scope>PROTEIN SEQUENCE OF 1-34</scope>
    <scope>FUNCTION</scope>
    <scope>MASS SPECTROMETRY</scope>
    <source>
        <tissue>Venom</tissue>
    </source>
</reference>
<reference key="3">
    <citation type="journal article" date="2010" name="J. Zhejiang Univ. Sci. B">
        <title>Mechanism of action of two insect toxins huwentoxin-III and hainantoxin-VI on voltage-gated sodium channels.</title>
        <authorList>
            <person name="Wang R.L."/>
            <person name="Yi S."/>
            <person name="Liang S.P."/>
        </authorList>
    </citation>
    <scope>FUNCTION</scope>
</reference>
<feature type="peptide" id="PRO_0000400718" description="U1-theraphotoxin-Hhn1a" evidence="2">
    <location>
        <begin position="1"/>
        <end position="35"/>
    </location>
</feature>
<feature type="peptide" id="PRO_0000434820" description="Hainantoxin-VI" evidence="2 4">
    <location>
        <begin position="1"/>
        <end position="34"/>
    </location>
</feature>
<feature type="disulfide bond" evidence="1">
    <location>
        <begin position="2"/>
        <end position="16"/>
    </location>
</feature>
<feature type="disulfide bond" evidence="1">
    <location>
        <begin position="9"/>
        <end position="21"/>
    </location>
</feature>
<feature type="disulfide bond" evidence="1">
    <location>
        <begin position="15"/>
        <end position="28"/>
    </location>
</feature>
<keyword id="KW-0903">Direct protein sequencing</keyword>
<keyword id="KW-1015">Disulfide bond</keyword>
<keyword id="KW-0872">Ion channel impairing toxin</keyword>
<keyword id="KW-0960">Knottin</keyword>
<keyword id="KW-0964">Secreted</keyword>
<keyword id="KW-0800">Toxin</keyword>
<comment type="function">
    <molecule>Hainantoxin-VI</molecule>
    <text evidence="3 4">Gating-modifier toxin that dose-dependently inhibits inactivation of voltage-gated sodium channels and reduces the peak of sodium current in cockroach DUM neurons (PubMed:20506577). In vivo, reversibly paralyzes cockroaches for several hours, paralyzes rat after intracerebroventricular injection and blocks the neuromuscular transmission of the isolated rat phrenic nerve-diaphragm preparation (Ref.2).</text>
</comment>
<comment type="subcellular location">
    <subcellularLocation>
        <location evidence="2">Secreted</location>
    </subcellularLocation>
</comment>
<comment type="tissue specificity">
    <text evidence="7">Expressed by the venom gland.</text>
</comment>
<comment type="domain">
    <text evidence="1">The presence of a 'disulfide through disulfide knot' structurally defines this protein as a knottin.</text>
</comment>
<comment type="mass spectrometry" mass="4057.6" method="MALDI" evidence="2">
    <molecule>U1-theraphotoxin-Hhn1a</molecule>
</comment>
<comment type="mass spectrometry" mass="3998.8" method="MALDI" evidence="2">
    <molecule>Hainantoxin-VI</molecule>
</comment>
<comment type="mass spectrometry" mass="3998.49" method="MALDI" evidence="4">
    <molecule>Hainantoxin-VI</molecule>
</comment>
<comment type="similarity">
    <text evidence="7">Belongs to the neurotoxin 10 (Hwtx-1) family. 24 (Hwtx-6) subfamily.</text>
</comment>
<name>HN324_CYRHA</name>
<dbReference type="SMR" id="P0CH70"/>
<dbReference type="ArachnoServer" id="AS002021">
    <property type="toxin name" value="U1-theraphotoxin-Hhn1a"/>
</dbReference>
<dbReference type="GO" id="GO:0005576">
    <property type="term" value="C:extracellular region"/>
    <property type="evidence" value="ECO:0007669"/>
    <property type="project" value="UniProtKB-SubCell"/>
</dbReference>
<dbReference type="GO" id="GO:0008200">
    <property type="term" value="F:ion channel inhibitor activity"/>
    <property type="evidence" value="ECO:0007669"/>
    <property type="project" value="InterPro"/>
</dbReference>
<dbReference type="GO" id="GO:0090729">
    <property type="term" value="F:toxin activity"/>
    <property type="evidence" value="ECO:0007669"/>
    <property type="project" value="UniProtKB-KW"/>
</dbReference>
<dbReference type="InterPro" id="IPR011696">
    <property type="entry name" value="Huwentoxin-1"/>
</dbReference>
<dbReference type="Pfam" id="PF07740">
    <property type="entry name" value="Toxin_12"/>
    <property type="match status" value="1"/>
</dbReference>
<dbReference type="SUPFAM" id="SSF57059">
    <property type="entry name" value="omega toxin-like"/>
    <property type="match status" value="1"/>
</dbReference>
<proteinExistence type="evidence at protein level"/>
<organism>
    <name type="scientific">Cyriopagopus hainanus</name>
    <name type="common">Chinese bird spider</name>
    <name type="synonym">Haplopelma hainanum</name>
    <dbReference type="NCBI Taxonomy" id="209901"/>
    <lineage>
        <taxon>Eukaryota</taxon>
        <taxon>Metazoa</taxon>
        <taxon>Ecdysozoa</taxon>
        <taxon>Arthropoda</taxon>
        <taxon>Chelicerata</taxon>
        <taxon>Arachnida</taxon>
        <taxon>Araneae</taxon>
        <taxon>Mygalomorphae</taxon>
        <taxon>Theraphosidae</taxon>
        <taxon>Haplopelma</taxon>
    </lineage>
</organism>
<accession>P0CH70</accession>
<accession>P0CH69</accession>